<dbReference type="PIR" id="A60357">
    <property type="entry name" value="A60357"/>
</dbReference>
<dbReference type="SMR" id="P35519"/>
<dbReference type="GO" id="GO:0005615">
    <property type="term" value="C:extracellular space"/>
    <property type="evidence" value="ECO:0007669"/>
    <property type="project" value="TreeGrafter"/>
</dbReference>
<dbReference type="GO" id="GO:0030141">
    <property type="term" value="C:secretory granule"/>
    <property type="evidence" value="ECO:0007669"/>
    <property type="project" value="TreeGrafter"/>
</dbReference>
<dbReference type="GO" id="GO:0005185">
    <property type="term" value="F:neurohypophyseal hormone activity"/>
    <property type="evidence" value="ECO:0007669"/>
    <property type="project" value="InterPro"/>
</dbReference>
<dbReference type="GO" id="GO:0031894">
    <property type="term" value="F:V1A vasopressin receptor binding"/>
    <property type="evidence" value="ECO:0007669"/>
    <property type="project" value="TreeGrafter"/>
</dbReference>
<dbReference type="FunFam" id="2.60.9.10:FF:000001">
    <property type="entry name" value="oxytocin-neurophysin 1"/>
    <property type="match status" value="1"/>
</dbReference>
<dbReference type="Gene3D" id="2.60.9.10">
    <property type="entry name" value="Neurohypophysial hormone domain"/>
    <property type="match status" value="1"/>
</dbReference>
<dbReference type="InterPro" id="IPR000981">
    <property type="entry name" value="Neurhyp_horm"/>
</dbReference>
<dbReference type="InterPro" id="IPR036387">
    <property type="entry name" value="Neurhyp_horm_dom_sf"/>
</dbReference>
<dbReference type="PANTHER" id="PTHR11681">
    <property type="entry name" value="NEUROPHYSIN"/>
    <property type="match status" value="1"/>
</dbReference>
<dbReference type="PANTHER" id="PTHR11681:SF9">
    <property type="entry name" value="VASOPRESSIN-NEUROPHYSIN 2-COPEPTIN"/>
    <property type="match status" value="1"/>
</dbReference>
<dbReference type="Pfam" id="PF00184">
    <property type="entry name" value="Hormone_5"/>
    <property type="match status" value="1"/>
</dbReference>
<dbReference type="PRINTS" id="PR00831">
    <property type="entry name" value="NEUROPHYSIN"/>
</dbReference>
<dbReference type="SMART" id="SM00003">
    <property type="entry name" value="NH"/>
    <property type="match status" value="1"/>
</dbReference>
<dbReference type="SUPFAM" id="SSF49606">
    <property type="entry name" value="Neurophysin II"/>
    <property type="match status" value="1"/>
</dbReference>
<proteinExistence type="evidence at protein level"/>
<accession>P35519</accession>
<comment type="function">
    <text>Neurophysin 1 specifically binds oxytocin.</text>
</comment>
<comment type="subcellular location">
    <subcellularLocation>
        <location>Secreted</location>
    </subcellularLocation>
</comment>
<comment type="similarity">
    <text evidence="2">Belongs to the vasopressin/oxytocin family.</text>
</comment>
<evidence type="ECO:0000250" key="1">
    <source>
        <dbReference type="UniProtKB" id="P01175"/>
    </source>
</evidence>
<evidence type="ECO:0000305" key="2"/>
<keyword id="KW-0903">Direct protein sequencing</keyword>
<keyword id="KW-1015">Disulfide bond</keyword>
<keyword id="KW-0964">Secreted</keyword>
<organism>
    <name type="scientific">Anser anser anser</name>
    <name type="common">Western greylag goose</name>
    <dbReference type="NCBI Taxonomy" id="8844"/>
    <lineage>
        <taxon>Eukaryota</taxon>
        <taxon>Metazoa</taxon>
        <taxon>Chordata</taxon>
        <taxon>Craniata</taxon>
        <taxon>Vertebrata</taxon>
        <taxon>Euteleostomi</taxon>
        <taxon>Archelosauria</taxon>
        <taxon>Archosauria</taxon>
        <taxon>Dinosauria</taxon>
        <taxon>Saurischia</taxon>
        <taxon>Theropoda</taxon>
        <taxon>Coelurosauria</taxon>
        <taxon>Aves</taxon>
        <taxon>Neognathae</taxon>
        <taxon>Galloanserae</taxon>
        <taxon>Anseriformes</taxon>
        <taxon>Anatidae</taxon>
        <taxon>Anserinae</taxon>
        <taxon>Anser</taxon>
    </lineage>
</organism>
<feature type="chain" id="PRO_0000160934" description="Neurophysin 1">
    <location>
        <begin position="1"/>
        <end position="93"/>
    </location>
</feature>
<feature type="disulfide bond" evidence="1">
    <location>
        <begin position="10"/>
        <end position="54"/>
    </location>
</feature>
<feature type="disulfide bond" evidence="1">
    <location>
        <begin position="13"/>
        <end position="27"/>
    </location>
</feature>
<feature type="disulfide bond" evidence="1">
    <location>
        <begin position="21"/>
        <end position="44"/>
    </location>
</feature>
<feature type="disulfide bond" evidence="1">
    <location>
        <begin position="28"/>
        <end position="34"/>
    </location>
</feature>
<feature type="disulfide bond" evidence="1">
    <location>
        <begin position="61"/>
        <end position="74"/>
    </location>
</feature>
<feature type="disulfide bond" evidence="1">
    <location>
        <begin position="68"/>
        <end position="86"/>
    </location>
</feature>
<feature type="disulfide bond" evidence="1">
    <location>
        <begin position="75"/>
        <end position="80"/>
    </location>
</feature>
<protein>
    <recommendedName>
        <fullName>Neurophysin 1</fullName>
    </recommendedName>
    <alternativeName>
        <fullName>VLDV-neurophysin</fullName>
    </alternativeName>
</protein>
<name>NEU1_ANSAN</name>
<sequence>AVLDGDVRKCLPCGPRNRGRCFGPRICCGEELGCYLGTPETLRCQEESFLPTPCESGRKPCGGDGASCAAPGICCSSEGCVADPACEREALFA</sequence>
<reference key="1">
    <citation type="journal article" date="1990" name="Int. J. Pept. Protein Res.">
        <title>Complete amino acid sequence of goose VLDV-neurophysin. Traces of a putative gene conversion between promesotocin and provasotocin genes.</title>
        <authorList>
            <person name="Michel G."/>
            <person name="Levy B."/>
            <person name="Chauvet M.-T."/>
            <person name="Chauvet J."/>
            <person name="Acher R."/>
        </authorList>
    </citation>
    <scope>PROTEIN SEQUENCE</scope>
    <source>
        <tissue>Pituitary</tissue>
    </source>
</reference>
<reference key="2">
    <citation type="journal article" date="1987" name="Biosci. Rep.">
        <title>Gene conversion in avian mesotocin and vasotocin genes: a recurrent mechanism linking two neurohypophysial precursor lineages?</title>
        <authorList>
            <person name="Levy B."/>
            <person name="Michel G."/>
            <person name="Chauvet J."/>
            <person name="Chauvet M.-T."/>
            <person name="Acher R."/>
        </authorList>
    </citation>
    <scope>PROTEIN SEQUENCE OF 9-17 AND 20-43</scope>
</reference>